<keyword id="KW-0004">4Fe-4S</keyword>
<keyword id="KW-0997">Cell inner membrane</keyword>
<keyword id="KW-1003">Cell membrane</keyword>
<keyword id="KW-0408">Iron</keyword>
<keyword id="KW-0411">Iron-sulfur</keyword>
<keyword id="KW-0472">Membrane</keyword>
<keyword id="KW-0479">Metal-binding</keyword>
<keyword id="KW-0520">NAD</keyword>
<keyword id="KW-0874">Quinone</keyword>
<keyword id="KW-0677">Repeat</keyword>
<keyword id="KW-1278">Translocase</keyword>
<keyword id="KW-0830">Ubiquinone</keyword>
<organism>
    <name type="scientific">Pseudomonas savastanoi pv. phaseolicola (strain 1448A / Race 6)</name>
    <name type="common">Pseudomonas syringae pv. phaseolicola (strain 1448A / Race 6)</name>
    <dbReference type="NCBI Taxonomy" id="264730"/>
    <lineage>
        <taxon>Bacteria</taxon>
        <taxon>Pseudomonadati</taxon>
        <taxon>Pseudomonadota</taxon>
        <taxon>Gammaproteobacteria</taxon>
        <taxon>Pseudomonadales</taxon>
        <taxon>Pseudomonadaceae</taxon>
        <taxon>Pseudomonas</taxon>
    </lineage>
</organism>
<accession>Q48H47</accession>
<feature type="chain" id="PRO_0000245726" description="NADH-quinone oxidoreductase subunit I">
    <location>
        <begin position="1"/>
        <end position="182"/>
    </location>
</feature>
<feature type="domain" description="4Fe-4S ferredoxin-type 1" evidence="1">
    <location>
        <begin position="52"/>
        <end position="82"/>
    </location>
</feature>
<feature type="domain" description="4Fe-4S ferredoxin-type 2" evidence="1">
    <location>
        <begin position="92"/>
        <end position="121"/>
    </location>
</feature>
<feature type="binding site" evidence="1">
    <location>
        <position position="62"/>
    </location>
    <ligand>
        <name>[4Fe-4S] cluster</name>
        <dbReference type="ChEBI" id="CHEBI:49883"/>
        <label>1</label>
    </ligand>
</feature>
<feature type="binding site" evidence="1">
    <location>
        <position position="65"/>
    </location>
    <ligand>
        <name>[4Fe-4S] cluster</name>
        <dbReference type="ChEBI" id="CHEBI:49883"/>
        <label>1</label>
    </ligand>
</feature>
<feature type="binding site" evidence="1">
    <location>
        <position position="68"/>
    </location>
    <ligand>
        <name>[4Fe-4S] cluster</name>
        <dbReference type="ChEBI" id="CHEBI:49883"/>
        <label>1</label>
    </ligand>
</feature>
<feature type="binding site" evidence="1">
    <location>
        <position position="72"/>
    </location>
    <ligand>
        <name>[4Fe-4S] cluster</name>
        <dbReference type="ChEBI" id="CHEBI:49883"/>
        <label>2</label>
    </ligand>
</feature>
<feature type="binding site" evidence="1">
    <location>
        <position position="101"/>
    </location>
    <ligand>
        <name>[4Fe-4S] cluster</name>
        <dbReference type="ChEBI" id="CHEBI:49883"/>
        <label>2</label>
    </ligand>
</feature>
<feature type="binding site" evidence="1">
    <location>
        <position position="104"/>
    </location>
    <ligand>
        <name>[4Fe-4S] cluster</name>
        <dbReference type="ChEBI" id="CHEBI:49883"/>
        <label>2</label>
    </ligand>
</feature>
<feature type="binding site" evidence="1">
    <location>
        <position position="107"/>
    </location>
    <ligand>
        <name>[4Fe-4S] cluster</name>
        <dbReference type="ChEBI" id="CHEBI:49883"/>
        <label>2</label>
    </ligand>
</feature>
<feature type="binding site" evidence="1">
    <location>
        <position position="111"/>
    </location>
    <ligand>
        <name>[4Fe-4S] cluster</name>
        <dbReference type="ChEBI" id="CHEBI:49883"/>
        <label>1</label>
    </ligand>
</feature>
<protein>
    <recommendedName>
        <fullName evidence="1">NADH-quinone oxidoreductase subunit I</fullName>
        <ecNumber evidence="1">7.1.1.-</ecNumber>
    </recommendedName>
    <alternativeName>
        <fullName evidence="1">NADH dehydrogenase I subunit I</fullName>
    </alternativeName>
    <alternativeName>
        <fullName evidence="1">NDH-1 subunit I</fullName>
    </alternativeName>
</protein>
<dbReference type="EC" id="7.1.1.-" evidence="1"/>
<dbReference type="EMBL" id="CP000058">
    <property type="protein sequence ID" value="AAZ33099.1"/>
    <property type="molecule type" value="Genomic_DNA"/>
</dbReference>
<dbReference type="RefSeq" id="WP_002554018.1">
    <property type="nucleotide sequence ID" value="NC_005773.3"/>
</dbReference>
<dbReference type="SMR" id="Q48H47"/>
<dbReference type="GeneID" id="96219671"/>
<dbReference type="KEGG" id="psp:PSPPH_3116"/>
<dbReference type="eggNOG" id="COG1143">
    <property type="taxonomic scope" value="Bacteria"/>
</dbReference>
<dbReference type="HOGENOM" id="CLU_067218_4_3_6"/>
<dbReference type="Proteomes" id="UP000000551">
    <property type="component" value="Chromosome"/>
</dbReference>
<dbReference type="GO" id="GO:0005886">
    <property type="term" value="C:plasma membrane"/>
    <property type="evidence" value="ECO:0007669"/>
    <property type="project" value="UniProtKB-SubCell"/>
</dbReference>
<dbReference type="GO" id="GO:0051539">
    <property type="term" value="F:4 iron, 4 sulfur cluster binding"/>
    <property type="evidence" value="ECO:0007669"/>
    <property type="project" value="UniProtKB-KW"/>
</dbReference>
<dbReference type="GO" id="GO:0005506">
    <property type="term" value="F:iron ion binding"/>
    <property type="evidence" value="ECO:0007669"/>
    <property type="project" value="UniProtKB-UniRule"/>
</dbReference>
<dbReference type="GO" id="GO:0050136">
    <property type="term" value="F:NADH:ubiquinone reductase (non-electrogenic) activity"/>
    <property type="evidence" value="ECO:0007669"/>
    <property type="project" value="UniProtKB-UniRule"/>
</dbReference>
<dbReference type="GO" id="GO:0048038">
    <property type="term" value="F:quinone binding"/>
    <property type="evidence" value="ECO:0007669"/>
    <property type="project" value="UniProtKB-KW"/>
</dbReference>
<dbReference type="GO" id="GO:0009060">
    <property type="term" value="P:aerobic respiration"/>
    <property type="evidence" value="ECO:0007669"/>
    <property type="project" value="TreeGrafter"/>
</dbReference>
<dbReference type="FunFam" id="3.30.70.3270:FF:000002">
    <property type="entry name" value="NADH-quinone oxidoreductase subunit I"/>
    <property type="match status" value="1"/>
</dbReference>
<dbReference type="Gene3D" id="3.30.70.3270">
    <property type="match status" value="1"/>
</dbReference>
<dbReference type="HAMAP" id="MF_01351">
    <property type="entry name" value="NDH1_NuoI"/>
    <property type="match status" value="1"/>
</dbReference>
<dbReference type="InterPro" id="IPR017896">
    <property type="entry name" value="4Fe4S_Fe-S-bd"/>
</dbReference>
<dbReference type="InterPro" id="IPR017900">
    <property type="entry name" value="4Fe4S_Fe_S_CS"/>
</dbReference>
<dbReference type="InterPro" id="IPR010226">
    <property type="entry name" value="NADH_quinone_OxRdtase_chainI"/>
</dbReference>
<dbReference type="NCBIfam" id="TIGR01971">
    <property type="entry name" value="NuoI"/>
    <property type="match status" value="1"/>
</dbReference>
<dbReference type="NCBIfam" id="NF004536">
    <property type="entry name" value="PRK05888.1-1"/>
    <property type="match status" value="1"/>
</dbReference>
<dbReference type="PANTHER" id="PTHR10849:SF20">
    <property type="entry name" value="NADH DEHYDROGENASE [UBIQUINONE] IRON-SULFUR PROTEIN 8, MITOCHONDRIAL"/>
    <property type="match status" value="1"/>
</dbReference>
<dbReference type="PANTHER" id="PTHR10849">
    <property type="entry name" value="NADH DEHYDROGENASE UBIQUINONE IRON-SULFUR PROTEIN 8, MITOCHONDRIAL"/>
    <property type="match status" value="1"/>
</dbReference>
<dbReference type="Pfam" id="PF12838">
    <property type="entry name" value="Fer4_7"/>
    <property type="match status" value="1"/>
</dbReference>
<dbReference type="SUPFAM" id="SSF54862">
    <property type="entry name" value="4Fe-4S ferredoxins"/>
    <property type="match status" value="1"/>
</dbReference>
<dbReference type="PROSITE" id="PS00198">
    <property type="entry name" value="4FE4S_FER_1"/>
    <property type="match status" value="2"/>
</dbReference>
<dbReference type="PROSITE" id="PS51379">
    <property type="entry name" value="4FE4S_FER_2"/>
    <property type="match status" value="2"/>
</dbReference>
<evidence type="ECO:0000255" key="1">
    <source>
        <dbReference type="HAMAP-Rule" id="MF_01351"/>
    </source>
</evidence>
<name>NUOI_PSE14</name>
<comment type="function">
    <text evidence="1">NDH-1 shuttles electrons from NADH, via FMN and iron-sulfur (Fe-S) centers, to quinones in the respiratory chain. The immediate electron acceptor for the enzyme in this species is believed to be ubiquinone. Couples the redox reaction to proton translocation (for every two electrons transferred, four hydrogen ions are translocated across the cytoplasmic membrane), and thus conserves the redox energy in a proton gradient.</text>
</comment>
<comment type="catalytic activity">
    <reaction evidence="1">
        <text>a quinone + NADH + 5 H(+)(in) = a quinol + NAD(+) + 4 H(+)(out)</text>
        <dbReference type="Rhea" id="RHEA:57888"/>
        <dbReference type="ChEBI" id="CHEBI:15378"/>
        <dbReference type="ChEBI" id="CHEBI:24646"/>
        <dbReference type="ChEBI" id="CHEBI:57540"/>
        <dbReference type="ChEBI" id="CHEBI:57945"/>
        <dbReference type="ChEBI" id="CHEBI:132124"/>
    </reaction>
</comment>
<comment type="cofactor">
    <cofactor evidence="1">
        <name>[4Fe-4S] cluster</name>
        <dbReference type="ChEBI" id="CHEBI:49883"/>
    </cofactor>
    <text evidence="1">Binds 2 [4Fe-4S] clusters per subunit.</text>
</comment>
<comment type="subunit">
    <text evidence="1">NDH-1 is composed of 13 different subunits. Subunits NuoA, H, J, K, L, M, N constitute the membrane sector of the complex.</text>
</comment>
<comment type="subcellular location">
    <subcellularLocation>
        <location evidence="1">Cell inner membrane</location>
        <topology evidence="1">Peripheral membrane protein</topology>
    </subcellularLocation>
</comment>
<comment type="similarity">
    <text evidence="1">Belongs to the complex I 23 kDa subunit family.</text>
</comment>
<gene>
    <name evidence="1" type="primary">nuoI</name>
    <name type="ordered locus">PSPPH_3116</name>
</gene>
<proteinExistence type="inferred from homology"/>
<reference key="1">
    <citation type="journal article" date="2005" name="J. Bacteriol.">
        <title>Whole-genome sequence analysis of Pseudomonas syringae pv. phaseolicola 1448A reveals divergence among pathovars in genes involved in virulence and transposition.</title>
        <authorList>
            <person name="Joardar V."/>
            <person name="Lindeberg M."/>
            <person name="Jackson R.W."/>
            <person name="Selengut J."/>
            <person name="Dodson R."/>
            <person name="Brinkac L.M."/>
            <person name="Daugherty S.C."/>
            <person name="DeBoy R.T."/>
            <person name="Durkin A.S."/>
            <person name="Gwinn Giglio M."/>
            <person name="Madupu R."/>
            <person name="Nelson W.C."/>
            <person name="Rosovitz M.J."/>
            <person name="Sullivan S.A."/>
            <person name="Crabtree J."/>
            <person name="Creasy T."/>
            <person name="Davidsen T.M."/>
            <person name="Haft D.H."/>
            <person name="Zafar N."/>
            <person name="Zhou L."/>
            <person name="Halpin R."/>
            <person name="Holley T."/>
            <person name="Khouri H.M."/>
            <person name="Feldblyum T.V."/>
            <person name="White O."/>
            <person name="Fraser C.M."/>
            <person name="Chatterjee A.K."/>
            <person name="Cartinhour S."/>
            <person name="Schneider D."/>
            <person name="Mansfield J.W."/>
            <person name="Collmer A."/>
            <person name="Buell R."/>
        </authorList>
    </citation>
    <scope>NUCLEOTIDE SEQUENCE [LARGE SCALE GENOMIC DNA]</scope>
    <source>
        <strain>1448A / Race 6</strain>
    </source>
</reference>
<sequence>MFKYIGDIVKGTGTQLRSLVMVFGHGFRKRDTLQYPEEQVYLPPRYRGRIVLTRDPDGEERCVACNLCAVACPVGCISLQKAETEDGRWYPDFFRINFSRCIFCGLCEEACPTTAIQLTPDFEMADFKRQDLVYEKEDLLISGPGKNPDYNFYRVAGMAIGGKPKGSAQNEAEPINVKSLLP</sequence>